<accession>Q2SZC2</accession>
<comment type="function">
    <text evidence="1">Part of the ABC transporter complex AraFGH involved in arabinose import. Responsible for energy coupling to the transport system.</text>
</comment>
<comment type="catalytic activity">
    <reaction evidence="1">
        <text>L-arabinose(out) + ATP + H2O = L-arabinose(in) + ADP + phosphate + H(+)</text>
        <dbReference type="Rhea" id="RHEA:30007"/>
        <dbReference type="ChEBI" id="CHEBI:15377"/>
        <dbReference type="ChEBI" id="CHEBI:15378"/>
        <dbReference type="ChEBI" id="CHEBI:17535"/>
        <dbReference type="ChEBI" id="CHEBI:30616"/>
        <dbReference type="ChEBI" id="CHEBI:43474"/>
        <dbReference type="ChEBI" id="CHEBI:456216"/>
        <dbReference type="EC" id="7.5.2.12"/>
    </reaction>
</comment>
<comment type="subunit">
    <text evidence="1">The complex is composed of two ATP-binding proteins (AraG), two transmembrane proteins (AraH) and a solute-binding protein (AraF).</text>
</comment>
<comment type="subcellular location">
    <subcellularLocation>
        <location evidence="1">Cell inner membrane</location>
        <topology evidence="1">Peripheral membrane protein</topology>
    </subcellularLocation>
</comment>
<comment type="similarity">
    <text evidence="1">Belongs to the ABC transporter superfamily. Arabinose importer (TC 3.A.1.2.2) family.</text>
</comment>
<keyword id="KW-0067">ATP-binding</keyword>
<keyword id="KW-0997">Cell inner membrane</keyword>
<keyword id="KW-1003">Cell membrane</keyword>
<keyword id="KW-0472">Membrane</keyword>
<keyword id="KW-0547">Nucleotide-binding</keyword>
<keyword id="KW-0677">Repeat</keyword>
<keyword id="KW-0762">Sugar transport</keyword>
<keyword id="KW-1278">Translocase</keyword>
<keyword id="KW-0813">Transport</keyword>
<reference key="1">
    <citation type="journal article" date="2005" name="BMC Genomics">
        <title>Bacterial genome adaptation to niches: divergence of the potential virulence genes in three Burkholderia species of different survival strategies.</title>
        <authorList>
            <person name="Kim H.S."/>
            <person name="Schell M.A."/>
            <person name="Yu Y."/>
            <person name="Ulrich R.L."/>
            <person name="Sarria S.H."/>
            <person name="Nierman W.C."/>
            <person name="DeShazer D."/>
        </authorList>
    </citation>
    <scope>NUCLEOTIDE SEQUENCE [LARGE SCALE GENOMIC DNA]</scope>
    <source>
        <strain>ATCC 700388 / DSM 13276 / CCUG 48851 / CIP 106301 / E264</strain>
    </source>
</reference>
<proteinExistence type="inferred from homology"/>
<feature type="chain" id="PRO_0000270462" description="Arabinose import ATP-binding protein AraG 1">
    <location>
        <begin position="1"/>
        <end position="503"/>
    </location>
</feature>
<feature type="domain" description="ABC transporter 1" evidence="1">
    <location>
        <begin position="5"/>
        <end position="240"/>
    </location>
</feature>
<feature type="domain" description="ABC transporter 2" evidence="1">
    <location>
        <begin position="253"/>
        <end position="497"/>
    </location>
</feature>
<feature type="binding site" evidence="1">
    <location>
        <begin position="37"/>
        <end position="44"/>
    </location>
    <ligand>
        <name>ATP</name>
        <dbReference type="ChEBI" id="CHEBI:30616"/>
    </ligand>
</feature>
<evidence type="ECO:0000255" key="1">
    <source>
        <dbReference type="HAMAP-Rule" id="MF_01721"/>
    </source>
</evidence>
<sequence length="503" mass="55040">MAAALRFDNIGKVFPGVRALDGISFDVQAGQVHGLMGENGAGKSTLLKILGGEYQPDSGGVLVDGQAMRFPSAAASIAAGVAVIHQELQYVPDLTVAENLLLGRLPSALGWVRKHTAQRFVRERLAAMGVDLDPQAKLRRLSIAQRQMVEICKALMRNARVIALDEPTSSLSHRETEVLFKLVDDLRRDGRALIYISHRMDEIYRLCDACTIFRDGRQVASHASLAQVPRETLVRQMVGREISDIYHYEPRALGDVRLSARALEGDALRSGASFDVRAGEIVGFFGLVGAGRSELMRVIYGADRRTGGALTLDGKPLDIRSTRDAIRHGIVLCPEDRKEEGIVAHASVAENINISCRRHALRAGLFLDLKREAETAERFIKLLKIKTPNRRQKIRFLSGGNQQKAILARWLAEPDLKVVILDEPTRGIDVGAKHEIYGVIYELAKRGCAIVMVSSELPEVLGVSDRIVVMREGRIAGELARGEANEEAVLNLALPQGAIAHAA</sequence>
<gene>
    <name evidence="1" type="primary">araG1</name>
    <name type="ordered locus">BTH_I1180</name>
</gene>
<organism>
    <name type="scientific">Burkholderia thailandensis (strain ATCC 700388 / DSM 13276 / CCUG 48851 / CIP 106301 / E264)</name>
    <dbReference type="NCBI Taxonomy" id="271848"/>
    <lineage>
        <taxon>Bacteria</taxon>
        <taxon>Pseudomonadati</taxon>
        <taxon>Pseudomonadota</taxon>
        <taxon>Betaproteobacteria</taxon>
        <taxon>Burkholderiales</taxon>
        <taxon>Burkholderiaceae</taxon>
        <taxon>Burkholderia</taxon>
        <taxon>pseudomallei group</taxon>
    </lineage>
</organism>
<name>ARAG1_BURTA</name>
<protein>
    <recommendedName>
        <fullName evidence="1">Arabinose import ATP-binding protein AraG 1</fullName>
        <ecNumber evidence="1">7.5.2.12</ecNumber>
    </recommendedName>
</protein>
<dbReference type="EC" id="7.5.2.12" evidence="1"/>
<dbReference type="EMBL" id="CP000086">
    <property type="protein sequence ID" value="ABC38263.1"/>
    <property type="molecule type" value="Genomic_DNA"/>
</dbReference>
<dbReference type="SMR" id="Q2SZC2"/>
<dbReference type="GeneID" id="45120930"/>
<dbReference type="KEGG" id="bte:BTH_I1180"/>
<dbReference type="HOGENOM" id="CLU_000604_92_3_4"/>
<dbReference type="Proteomes" id="UP000001930">
    <property type="component" value="Chromosome I"/>
</dbReference>
<dbReference type="GO" id="GO:0005886">
    <property type="term" value="C:plasma membrane"/>
    <property type="evidence" value="ECO:0007669"/>
    <property type="project" value="UniProtKB-SubCell"/>
</dbReference>
<dbReference type="GO" id="GO:0015612">
    <property type="term" value="F:ABC-type L-arabinose transporter activity"/>
    <property type="evidence" value="ECO:0007669"/>
    <property type="project" value="UniProtKB-EC"/>
</dbReference>
<dbReference type="GO" id="GO:0005524">
    <property type="term" value="F:ATP binding"/>
    <property type="evidence" value="ECO:0007669"/>
    <property type="project" value="UniProtKB-KW"/>
</dbReference>
<dbReference type="GO" id="GO:0016887">
    <property type="term" value="F:ATP hydrolysis activity"/>
    <property type="evidence" value="ECO:0007669"/>
    <property type="project" value="InterPro"/>
</dbReference>
<dbReference type="CDD" id="cd03216">
    <property type="entry name" value="ABC_Carb_Monos_I"/>
    <property type="match status" value="1"/>
</dbReference>
<dbReference type="CDD" id="cd03215">
    <property type="entry name" value="ABC_Carb_Monos_II"/>
    <property type="match status" value="1"/>
</dbReference>
<dbReference type="FunFam" id="3.40.50.300:FF:000126">
    <property type="entry name" value="Galactose/methyl galactoside import ATP-binding protein MglA"/>
    <property type="match status" value="1"/>
</dbReference>
<dbReference type="FunFam" id="3.40.50.300:FF:000127">
    <property type="entry name" value="Ribose import ATP-binding protein RbsA"/>
    <property type="match status" value="1"/>
</dbReference>
<dbReference type="Gene3D" id="3.40.50.300">
    <property type="entry name" value="P-loop containing nucleotide triphosphate hydrolases"/>
    <property type="match status" value="2"/>
</dbReference>
<dbReference type="InterPro" id="IPR003593">
    <property type="entry name" value="AAA+_ATPase"/>
</dbReference>
<dbReference type="InterPro" id="IPR050107">
    <property type="entry name" value="ABC_carbohydrate_import_ATPase"/>
</dbReference>
<dbReference type="InterPro" id="IPR003439">
    <property type="entry name" value="ABC_transporter-like_ATP-bd"/>
</dbReference>
<dbReference type="InterPro" id="IPR017871">
    <property type="entry name" value="ABC_transporter-like_CS"/>
</dbReference>
<dbReference type="InterPro" id="IPR027417">
    <property type="entry name" value="P-loop_NTPase"/>
</dbReference>
<dbReference type="NCBIfam" id="NF008442">
    <property type="entry name" value="PRK11288.1"/>
    <property type="match status" value="1"/>
</dbReference>
<dbReference type="PANTHER" id="PTHR43790:SF6">
    <property type="entry name" value="ARABINOSE IMPORT ATP-BINDING PROTEIN ARAG"/>
    <property type="match status" value="1"/>
</dbReference>
<dbReference type="PANTHER" id="PTHR43790">
    <property type="entry name" value="CARBOHYDRATE TRANSPORT ATP-BINDING PROTEIN MG119-RELATED"/>
    <property type="match status" value="1"/>
</dbReference>
<dbReference type="Pfam" id="PF00005">
    <property type="entry name" value="ABC_tran"/>
    <property type="match status" value="2"/>
</dbReference>
<dbReference type="SMART" id="SM00382">
    <property type="entry name" value="AAA"/>
    <property type="match status" value="2"/>
</dbReference>
<dbReference type="SUPFAM" id="SSF52540">
    <property type="entry name" value="P-loop containing nucleoside triphosphate hydrolases"/>
    <property type="match status" value="2"/>
</dbReference>
<dbReference type="PROSITE" id="PS00211">
    <property type="entry name" value="ABC_TRANSPORTER_1"/>
    <property type="match status" value="1"/>
</dbReference>
<dbReference type="PROSITE" id="PS50893">
    <property type="entry name" value="ABC_TRANSPORTER_2"/>
    <property type="match status" value="2"/>
</dbReference>
<dbReference type="PROSITE" id="PS51268">
    <property type="entry name" value="ARAG"/>
    <property type="match status" value="1"/>
</dbReference>